<dbReference type="EC" id="1.1.1.195" evidence="1"/>
<dbReference type="SMR" id="P85916"/>
<dbReference type="UniPathway" id="UPA00711"/>
<dbReference type="GO" id="GO:0045551">
    <property type="term" value="F:cinnamyl-alcohol dehydrogenase activity"/>
    <property type="evidence" value="ECO:0007669"/>
    <property type="project" value="UniProtKB-EC"/>
</dbReference>
<dbReference type="GO" id="GO:0050268">
    <property type="term" value="F:coniferyl-alcohol dehydrogenase activity"/>
    <property type="evidence" value="ECO:0007669"/>
    <property type="project" value="RHEA"/>
</dbReference>
<dbReference type="GO" id="GO:0046872">
    <property type="term" value="F:metal ion binding"/>
    <property type="evidence" value="ECO:0007669"/>
    <property type="project" value="UniProtKB-KW"/>
</dbReference>
<dbReference type="GO" id="GO:0009809">
    <property type="term" value="P:lignin biosynthetic process"/>
    <property type="evidence" value="ECO:0007669"/>
    <property type="project" value="UniProtKB-KW"/>
</dbReference>
<dbReference type="Gene3D" id="3.40.50.720">
    <property type="entry name" value="NAD(P)-binding Rossmann-like Domain"/>
    <property type="match status" value="1"/>
</dbReference>
<name>CADH2_PSEMZ</name>
<proteinExistence type="evidence at protein level"/>
<reference key="1">
    <citation type="journal article" date="2008" name="J. Proteomics">
        <title>A proteomics approach to identify proteins differentially expressed in Douglas-fir seedlings infected by Phellinus sulphurascens.</title>
        <authorList>
            <person name="Islam M.A."/>
            <person name="Sturrock R.N."/>
            <person name="Ekramoddoullah A.K.M."/>
        </authorList>
    </citation>
    <scope>IDENTIFICATION BY MASS SPECTROMETRY</scope>
</reference>
<organism>
    <name type="scientific">Pseudotsuga menziesii</name>
    <name type="common">Douglas-fir</name>
    <name type="synonym">Abies menziesii</name>
    <dbReference type="NCBI Taxonomy" id="3357"/>
    <lineage>
        <taxon>Eukaryota</taxon>
        <taxon>Viridiplantae</taxon>
        <taxon>Streptophyta</taxon>
        <taxon>Embryophyta</taxon>
        <taxon>Tracheophyta</taxon>
        <taxon>Spermatophyta</taxon>
        <taxon>Pinopsida</taxon>
        <taxon>Pinidae</taxon>
        <taxon>Conifers I</taxon>
        <taxon>Pinales</taxon>
        <taxon>Pinaceae</taxon>
        <taxon>Pseudotsuga</taxon>
    </lineage>
</organism>
<keyword id="KW-0438">Lignin biosynthesis</keyword>
<keyword id="KW-0479">Metal-binding</keyword>
<keyword id="KW-0521">NADP</keyword>
<keyword id="KW-0560">Oxidoreductase</keyword>
<keyword id="KW-0862">Zinc</keyword>
<sequence length="41" mass="4100">CGILGLGGVGHMGVKAFGLHVTVISSSDKFVVDVAASNLDK</sequence>
<evidence type="ECO:0000250" key="1">
    <source>
        <dbReference type="UniProtKB" id="O49482"/>
    </source>
</evidence>
<evidence type="ECO:0000250" key="2">
    <source>
        <dbReference type="UniProtKB" id="Q08350"/>
    </source>
</evidence>
<evidence type="ECO:0000255" key="3"/>
<evidence type="ECO:0000303" key="4">
    <source>
    </source>
</evidence>
<feature type="chain" id="PRO_0000371718" description="Probable cinnamyl alcohol dehydrogenase 2">
    <location>
        <begin position="1" status="less than"/>
        <end position="41" status="greater than"/>
    </location>
</feature>
<feature type="non-consecutive residues" evidence="4">
    <location>
        <begin position="15"/>
        <end position="16"/>
    </location>
</feature>
<feature type="non-consecutive residues" evidence="4">
    <location>
        <begin position="29"/>
        <end position="30"/>
    </location>
</feature>
<feature type="non-terminal residue" evidence="4">
    <location>
        <position position="1"/>
    </location>
</feature>
<feature type="non-terminal residue" evidence="4">
    <location>
        <position position="41"/>
    </location>
</feature>
<comment type="function">
    <text evidence="1">Involved in lignin biosynthesis. Catalyzes the final step specific for the production of lignin monomers, like coniferyl alcohol, sinapyl alcohol and 4-coumaryl alcohol (By similarity).</text>
</comment>
<comment type="catalytic activity">
    <reaction evidence="1">
        <text>(E)-cinnamyl alcohol + NADP(+) = (E)-cinnamaldehyde + NADPH + H(+)</text>
        <dbReference type="Rhea" id="RHEA:10392"/>
        <dbReference type="ChEBI" id="CHEBI:15378"/>
        <dbReference type="ChEBI" id="CHEBI:16731"/>
        <dbReference type="ChEBI" id="CHEBI:33227"/>
        <dbReference type="ChEBI" id="CHEBI:57783"/>
        <dbReference type="ChEBI" id="CHEBI:58349"/>
        <dbReference type="EC" id="1.1.1.195"/>
    </reaction>
    <physiologicalReaction direction="right-to-left" evidence="1">
        <dbReference type="Rhea" id="RHEA:10394"/>
    </physiologicalReaction>
</comment>
<comment type="catalytic activity">
    <reaction evidence="1">
        <text>(E)-coniferol + NADP(+) = (E)-coniferaldehyde + NADPH + H(+)</text>
        <dbReference type="Rhea" id="RHEA:22444"/>
        <dbReference type="ChEBI" id="CHEBI:15378"/>
        <dbReference type="ChEBI" id="CHEBI:16547"/>
        <dbReference type="ChEBI" id="CHEBI:17745"/>
        <dbReference type="ChEBI" id="CHEBI:57783"/>
        <dbReference type="ChEBI" id="CHEBI:58349"/>
        <dbReference type="EC" id="1.1.1.195"/>
    </reaction>
    <physiologicalReaction direction="right-to-left" evidence="1">
        <dbReference type="Rhea" id="RHEA:22446"/>
    </physiologicalReaction>
</comment>
<comment type="catalytic activity">
    <reaction evidence="1">
        <text>(E)-sinapyl alcohol + NADP(+) = (E)-sinapaldehyde + NADPH + H(+)</text>
        <dbReference type="Rhea" id="RHEA:45704"/>
        <dbReference type="ChEBI" id="CHEBI:15378"/>
        <dbReference type="ChEBI" id="CHEBI:27949"/>
        <dbReference type="ChEBI" id="CHEBI:57783"/>
        <dbReference type="ChEBI" id="CHEBI:58349"/>
        <dbReference type="ChEBI" id="CHEBI:64557"/>
        <dbReference type="EC" id="1.1.1.195"/>
    </reaction>
    <physiologicalReaction direction="right-to-left" evidence="1">
        <dbReference type="Rhea" id="RHEA:45706"/>
    </physiologicalReaction>
</comment>
<comment type="catalytic activity">
    <reaction evidence="1">
        <text>(E)-4-coumaroyl alcohol + NADP(+) = (E)-4-coumaraldehyde + NADPH + H(+)</text>
        <dbReference type="Rhea" id="RHEA:45724"/>
        <dbReference type="ChEBI" id="CHEBI:15378"/>
        <dbReference type="ChEBI" id="CHEBI:28353"/>
        <dbReference type="ChEBI" id="CHEBI:57783"/>
        <dbReference type="ChEBI" id="CHEBI:58349"/>
        <dbReference type="ChEBI" id="CHEBI:64555"/>
        <dbReference type="EC" id="1.1.1.195"/>
    </reaction>
    <physiologicalReaction direction="right-to-left" evidence="1">
        <dbReference type="Rhea" id="RHEA:45726"/>
    </physiologicalReaction>
</comment>
<comment type="catalytic activity">
    <reaction evidence="1">
        <text>(E)-caffeyl alcohol + NADP(+) = (E)-caffeyl aldehyde + NADPH + H(+)</text>
        <dbReference type="Rhea" id="RHEA:45728"/>
        <dbReference type="ChEBI" id="CHEBI:15378"/>
        <dbReference type="ChEBI" id="CHEBI:28323"/>
        <dbReference type="ChEBI" id="CHEBI:31334"/>
        <dbReference type="ChEBI" id="CHEBI:57783"/>
        <dbReference type="ChEBI" id="CHEBI:58349"/>
    </reaction>
    <physiologicalReaction direction="right-to-left" evidence="1">
        <dbReference type="Rhea" id="RHEA:45730"/>
    </physiologicalReaction>
</comment>
<comment type="cofactor">
    <cofactor evidence="2">
        <name>Zn(2+)</name>
        <dbReference type="ChEBI" id="CHEBI:29105"/>
    </cofactor>
    <text evidence="2">Binds 2 Zn(2+) ions per subunit.</text>
</comment>
<comment type="pathway">
    <text evidence="2">Aromatic compound metabolism; phenylpropanoid biosynthesis.</text>
</comment>
<comment type="similarity">
    <text evidence="3">Belongs to the zinc-containing alcohol dehydrogenase family.</text>
</comment>
<protein>
    <recommendedName>
        <fullName>Probable cinnamyl alcohol dehydrogenase 2</fullName>
        <shortName evidence="2">CAD 2</shortName>
        <ecNumber evidence="1">1.1.1.195</ecNumber>
    </recommendedName>
</protein>
<accession>P85916</accession>